<proteinExistence type="inferred from homology"/>
<dbReference type="EC" id="2.5.1.19" evidence="1"/>
<dbReference type="EMBL" id="CP000826">
    <property type="protein sequence ID" value="ABV40811.1"/>
    <property type="molecule type" value="Genomic_DNA"/>
</dbReference>
<dbReference type="SMR" id="A8GCH1"/>
<dbReference type="STRING" id="399741.Spro_1707"/>
<dbReference type="KEGG" id="spe:Spro_1707"/>
<dbReference type="eggNOG" id="COG0128">
    <property type="taxonomic scope" value="Bacteria"/>
</dbReference>
<dbReference type="HOGENOM" id="CLU_024321_0_0_6"/>
<dbReference type="OrthoDB" id="9809920at2"/>
<dbReference type="UniPathway" id="UPA00053">
    <property type="reaction ID" value="UER00089"/>
</dbReference>
<dbReference type="GO" id="GO:0005737">
    <property type="term" value="C:cytoplasm"/>
    <property type="evidence" value="ECO:0007669"/>
    <property type="project" value="UniProtKB-SubCell"/>
</dbReference>
<dbReference type="GO" id="GO:0003866">
    <property type="term" value="F:3-phosphoshikimate 1-carboxyvinyltransferase activity"/>
    <property type="evidence" value="ECO:0007669"/>
    <property type="project" value="UniProtKB-UniRule"/>
</dbReference>
<dbReference type="GO" id="GO:0008652">
    <property type="term" value="P:amino acid biosynthetic process"/>
    <property type="evidence" value="ECO:0007669"/>
    <property type="project" value="UniProtKB-KW"/>
</dbReference>
<dbReference type="GO" id="GO:0009073">
    <property type="term" value="P:aromatic amino acid family biosynthetic process"/>
    <property type="evidence" value="ECO:0007669"/>
    <property type="project" value="UniProtKB-KW"/>
</dbReference>
<dbReference type="GO" id="GO:0009423">
    <property type="term" value="P:chorismate biosynthetic process"/>
    <property type="evidence" value="ECO:0007669"/>
    <property type="project" value="UniProtKB-UniRule"/>
</dbReference>
<dbReference type="CDD" id="cd01556">
    <property type="entry name" value="EPSP_synthase"/>
    <property type="match status" value="1"/>
</dbReference>
<dbReference type="FunFam" id="3.65.10.10:FF:000003">
    <property type="entry name" value="3-phosphoshikimate 1-carboxyvinyltransferase"/>
    <property type="match status" value="1"/>
</dbReference>
<dbReference type="FunFam" id="3.65.10.10:FF:000004">
    <property type="entry name" value="3-phosphoshikimate 1-carboxyvinyltransferase"/>
    <property type="match status" value="1"/>
</dbReference>
<dbReference type="Gene3D" id="3.65.10.10">
    <property type="entry name" value="Enolpyruvate transferase domain"/>
    <property type="match status" value="2"/>
</dbReference>
<dbReference type="HAMAP" id="MF_00210">
    <property type="entry name" value="EPSP_synth"/>
    <property type="match status" value="1"/>
</dbReference>
<dbReference type="InterPro" id="IPR001986">
    <property type="entry name" value="Enolpyruvate_Tfrase_dom"/>
</dbReference>
<dbReference type="InterPro" id="IPR036968">
    <property type="entry name" value="Enolpyruvate_Tfrase_sf"/>
</dbReference>
<dbReference type="InterPro" id="IPR006264">
    <property type="entry name" value="EPSP_synthase"/>
</dbReference>
<dbReference type="InterPro" id="IPR023193">
    <property type="entry name" value="EPSP_synthase_CS"/>
</dbReference>
<dbReference type="InterPro" id="IPR013792">
    <property type="entry name" value="RNA3'P_cycl/enolpyr_Trfase_a/b"/>
</dbReference>
<dbReference type="NCBIfam" id="TIGR01356">
    <property type="entry name" value="aroA"/>
    <property type="match status" value="1"/>
</dbReference>
<dbReference type="PANTHER" id="PTHR21090">
    <property type="entry name" value="AROM/DEHYDROQUINATE SYNTHASE"/>
    <property type="match status" value="1"/>
</dbReference>
<dbReference type="PANTHER" id="PTHR21090:SF5">
    <property type="entry name" value="PENTAFUNCTIONAL AROM POLYPEPTIDE"/>
    <property type="match status" value="1"/>
</dbReference>
<dbReference type="Pfam" id="PF00275">
    <property type="entry name" value="EPSP_synthase"/>
    <property type="match status" value="1"/>
</dbReference>
<dbReference type="PIRSF" id="PIRSF000505">
    <property type="entry name" value="EPSPS"/>
    <property type="match status" value="1"/>
</dbReference>
<dbReference type="SUPFAM" id="SSF55205">
    <property type="entry name" value="EPT/RTPC-like"/>
    <property type="match status" value="1"/>
</dbReference>
<dbReference type="PROSITE" id="PS00104">
    <property type="entry name" value="EPSP_SYNTHASE_1"/>
    <property type="match status" value="1"/>
</dbReference>
<dbReference type="PROSITE" id="PS00885">
    <property type="entry name" value="EPSP_SYNTHASE_2"/>
    <property type="match status" value="1"/>
</dbReference>
<protein>
    <recommendedName>
        <fullName evidence="1">3-phosphoshikimate 1-carboxyvinyltransferase</fullName>
        <ecNumber evidence="1">2.5.1.19</ecNumber>
    </recommendedName>
    <alternativeName>
        <fullName evidence="1">5-enolpyruvylshikimate-3-phosphate synthase</fullName>
        <shortName evidence="1">EPSP synthase</shortName>
        <shortName evidence="1">EPSPS</shortName>
    </alternativeName>
</protein>
<accession>A8GCH1</accession>
<name>AROA_SERP5</name>
<feature type="chain" id="PRO_1000058616" description="3-phosphoshikimate 1-carboxyvinyltransferase">
    <location>
        <begin position="1"/>
        <end position="428"/>
    </location>
</feature>
<feature type="active site" description="Proton acceptor" evidence="1">
    <location>
        <position position="314"/>
    </location>
</feature>
<feature type="binding site" evidence="1">
    <location>
        <position position="23"/>
    </location>
    <ligand>
        <name>3-phosphoshikimate</name>
        <dbReference type="ChEBI" id="CHEBI:145989"/>
    </ligand>
</feature>
<feature type="binding site" evidence="1">
    <location>
        <position position="23"/>
    </location>
    <ligand>
        <name>phosphoenolpyruvate</name>
        <dbReference type="ChEBI" id="CHEBI:58702"/>
    </ligand>
</feature>
<feature type="binding site" evidence="1">
    <location>
        <position position="24"/>
    </location>
    <ligand>
        <name>3-phosphoshikimate</name>
        <dbReference type="ChEBI" id="CHEBI:145989"/>
    </ligand>
</feature>
<feature type="binding site" evidence="1">
    <location>
        <position position="28"/>
    </location>
    <ligand>
        <name>3-phosphoshikimate</name>
        <dbReference type="ChEBI" id="CHEBI:145989"/>
    </ligand>
</feature>
<feature type="binding site" evidence="1">
    <location>
        <position position="97"/>
    </location>
    <ligand>
        <name>phosphoenolpyruvate</name>
        <dbReference type="ChEBI" id="CHEBI:58702"/>
    </ligand>
</feature>
<feature type="binding site" evidence="1">
    <location>
        <position position="125"/>
    </location>
    <ligand>
        <name>phosphoenolpyruvate</name>
        <dbReference type="ChEBI" id="CHEBI:58702"/>
    </ligand>
</feature>
<feature type="binding site" evidence="1">
    <location>
        <position position="170"/>
    </location>
    <ligand>
        <name>3-phosphoshikimate</name>
        <dbReference type="ChEBI" id="CHEBI:145989"/>
    </ligand>
</feature>
<feature type="binding site" evidence="1">
    <location>
        <position position="171"/>
    </location>
    <ligand>
        <name>3-phosphoshikimate</name>
        <dbReference type="ChEBI" id="CHEBI:145989"/>
    </ligand>
</feature>
<feature type="binding site" evidence="1">
    <location>
        <position position="172"/>
    </location>
    <ligand>
        <name>3-phosphoshikimate</name>
        <dbReference type="ChEBI" id="CHEBI:145989"/>
    </ligand>
</feature>
<feature type="binding site" evidence="1">
    <location>
        <position position="172"/>
    </location>
    <ligand>
        <name>phosphoenolpyruvate</name>
        <dbReference type="ChEBI" id="CHEBI:58702"/>
    </ligand>
</feature>
<feature type="binding site" evidence="1">
    <location>
        <position position="198"/>
    </location>
    <ligand>
        <name>3-phosphoshikimate</name>
        <dbReference type="ChEBI" id="CHEBI:145989"/>
    </ligand>
</feature>
<feature type="binding site" evidence="1">
    <location>
        <position position="314"/>
    </location>
    <ligand>
        <name>3-phosphoshikimate</name>
        <dbReference type="ChEBI" id="CHEBI:145989"/>
    </ligand>
</feature>
<feature type="binding site" evidence="1">
    <location>
        <position position="337"/>
    </location>
    <ligand>
        <name>3-phosphoshikimate</name>
        <dbReference type="ChEBI" id="CHEBI:145989"/>
    </ligand>
</feature>
<feature type="binding site" evidence="1">
    <location>
        <position position="341"/>
    </location>
    <ligand>
        <name>3-phosphoshikimate</name>
        <dbReference type="ChEBI" id="CHEBI:145989"/>
    </ligand>
</feature>
<feature type="binding site" evidence="1">
    <location>
        <position position="345"/>
    </location>
    <ligand>
        <name>phosphoenolpyruvate</name>
        <dbReference type="ChEBI" id="CHEBI:58702"/>
    </ligand>
</feature>
<feature type="binding site" evidence="1">
    <location>
        <position position="387"/>
    </location>
    <ligand>
        <name>phosphoenolpyruvate</name>
        <dbReference type="ChEBI" id="CHEBI:58702"/>
    </ligand>
</feature>
<feature type="binding site" evidence="1">
    <location>
        <position position="412"/>
    </location>
    <ligand>
        <name>phosphoenolpyruvate</name>
        <dbReference type="ChEBI" id="CHEBI:58702"/>
    </ligand>
</feature>
<keyword id="KW-0028">Amino-acid biosynthesis</keyword>
<keyword id="KW-0057">Aromatic amino acid biosynthesis</keyword>
<keyword id="KW-0963">Cytoplasm</keyword>
<keyword id="KW-0808">Transferase</keyword>
<comment type="function">
    <text evidence="1">Catalyzes the transfer of the enolpyruvyl moiety of phosphoenolpyruvate (PEP) to the 5-hydroxyl of shikimate-3-phosphate (S3P) to produce enolpyruvyl shikimate-3-phosphate and inorganic phosphate.</text>
</comment>
<comment type="catalytic activity">
    <reaction evidence="1">
        <text>3-phosphoshikimate + phosphoenolpyruvate = 5-O-(1-carboxyvinyl)-3-phosphoshikimate + phosphate</text>
        <dbReference type="Rhea" id="RHEA:21256"/>
        <dbReference type="ChEBI" id="CHEBI:43474"/>
        <dbReference type="ChEBI" id="CHEBI:57701"/>
        <dbReference type="ChEBI" id="CHEBI:58702"/>
        <dbReference type="ChEBI" id="CHEBI:145989"/>
        <dbReference type="EC" id="2.5.1.19"/>
    </reaction>
    <physiologicalReaction direction="left-to-right" evidence="1">
        <dbReference type="Rhea" id="RHEA:21257"/>
    </physiologicalReaction>
</comment>
<comment type="pathway">
    <text evidence="1">Metabolic intermediate biosynthesis; chorismate biosynthesis; chorismate from D-erythrose 4-phosphate and phosphoenolpyruvate: step 6/7.</text>
</comment>
<comment type="subunit">
    <text evidence="1">Monomer.</text>
</comment>
<comment type="subcellular location">
    <subcellularLocation>
        <location evidence="1">Cytoplasm</location>
    </subcellularLocation>
</comment>
<comment type="similarity">
    <text evidence="1">Belongs to the EPSP synthase family.</text>
</comment>
<evidence type="ECO:0000255" key="1">
    <source>
        <dbReference type="HAMAP-Rule" id="MF_00210"/>
    </source>
</evidence>
<reference key="1">
    <citation type="submission" date="2007-09" db="EMBL/GenBank/DDBJ databases">
        <title>Complete sequence of chromosome of Serratia proteamaculans 568.</title>
        <authorList>
            <consortium name="US DOE Joint Genome Institute"/>
            <person name="Copeland A."/>
            <person name="Lucas S."/>
            <person name="Lapidus A."/>
            <person name="Barry K."/>
            <person name="Glavina del Rio T."/>
            <person name="Dalin E."/>
            <person name="Tice H."/>
            <person name="Pitluck S."/>
            <person name="Chain P."/>
            <person name="Malfatti S."/>
            <person name="Shin M."/>
            <person name="Vergez L."/>
            <person name="Schmutz J."/>
            <person name="Larimer F."/>
            <person name="Land M."/>
            <person name="Hauser L."/>
            <person name="Kyrpides N."/>
            <person name="Kim E."/>
            <person name="Taghavi S."/>
            <person name="Newman L."/>
            <person name="Vangronsveld J."/>
            <person name="van der Lelie D."/>
            <person name="Richardson P."/>
        </authorList>
    </citation>
    <scope>NUCLEOTIDE SEQUENCE [LARGE SCALE GENOMIC DNA]</scope>
    <source>
        <strain>568</strain>
    </source>
</reference>
<sequence>MVDSLTLQPVALVNGTVNLPGSKSVSNRALLLAALAEGTTTLTNLLDSDDVRHMLNALQALGVSYQLSDDRTTCKVDGVGGPLVASKPLELFLGNAGTAMRPLAAALCLGSNDVVLTGEPRMKERPIGHLVDALRQGGAQIDYLEQTDYPPLRLRGGFRGGDVTVDGSVSSQFLTALLMTAPLAEQDTHIHIKGELVSKPYIDITLHLMRTFGVEVSHDNYRVFHINGRQTYRSPGDYLVEGDASSASYFLAAAAIKGGTVRVTGIGKKSVQGDTKFADVLEKMGARITWGDDYIECSRGELRGIDMDMNHIPDAAMTIATAALFAEGPTTIRNIYNWRVKETDRLAAMATELRKVGAEVDEGEDYIHVVPPAKLKFADIGTYNDHRMAMCFSLVALSDTPVTILDPKCTAKTFPDYFEQLARISQLA</sequence>
<gene>
    <name evidence="1" type="primary">aroA</name>
    <name type="ordered locus">Spro_1707</name>
</gene>
<organism>
    <name type="scientific">Serratia proteamaculans (strain 568)</name>
    <dbReference type="NCBI Taxonomy" id="399741"/>
    <lineage>
        <taxon>Bacteria</taxon>
        <taxon>Pseudomonadati</taxon>
        <taxon>Pseudomonadota</taxon>
        <taxon>Gammaproteobacteria</taxon>
        <taxon>Enterobacterales</taxon>
        <taxon>Yersiniaceae</taxon>
        <taxon>Serratia</taxon>
    </lineage>
</organism>